<reference key="1">
    <citation type="journal article" date="2007" name="Proc. Natl. Acad. Sci. U.S.A.">
        <title>The genome of Syntrophus aciditrophicus: life at the thermodynamic limit of microbial growth.</title>
        <authorList>
            <person name="McInerney M.J."/>
            <person name="Rohlin L."/>
            <person name="Mouttaki H."/>
            <person name="Kim U."/>
            <person name="Krupp R.S."/>
            <person name="Rios-Hernandez L."/>
            <person name="Sieber J."/>
            <person name="Struchtemeyer C.G."/>
            <person name="Bhattacharyya A."/>
            <person name="Campbell J.W."/>
            <person name="Gunsalus R.P."/>
        </authorList>
    </citation>
    <scope>NUCLEOTIDE SEQUENCE [LARGE SCALE GENOMIC DNA]</scope>
    <source>
        <strain>SB</strain>
    </source>
</reference>
<name>IF1_SYNAS</name>
<comment type="function">
    <text evidence="1">One of the essential components for the initiation of protein synthesis. Stabilizes the binding of IF-2 and IF-3 on the 30S subunit to which N-formylmethionyl-tRNA(fMet) subsequently binds. Helps modulate mRNA selection, yielding the 30S pre-initiation complex (PIC). Upon addition of the 50S ribosomal subunit IF-1, IF-2 and IF-3 are released leaving the mature 70S translation initiation complex.</text>
</comment>
<comment type="subunit">
    <text evidence="1">Component of the 30S ribosomal translation pre-initiation complex which assembles on the 30S ribosome in the order IF-2 and IF-3, IF-1 and N-formylmethionyl-tRNA(fMet); mRNA recruitment can occur at any time during PIC assembly.</text>
</comment>
<comment type="subcellular location">
    <subcellularLocation>
        <location evidence="1">Cytoplasm</location>
    </subcellularLocation>
</comment>
<comment type="similarity">
    <text evidence="1">Belongs to the IF-1 family.</text>
</comment>
<feature type="chain" id="PRO_0000263890" description="Translation initiation factor IF-1">
    <location>
        <begin position="1"/>
        <end position="72"/>
    </location>
</feature>
<feature type="domain" description="S1-like" evidence="1">
    <location>
        <begin position="1"/>
        <end position="72"/>
    </location>
</feature>
<dbReference type="EMBL" id="CP000252">
    <property type="protein sequence ID" value="ABC76203.1"/>
    <property type="molecule type" value="Genomic_DNA"/>
</dbReference>
<dbReference type="RefSeq" id="WP_011416237.1">
    <property type="nucleotide sequence ID" value="NC_007759.1"/>
</dbReference>
<dbReference type="SMR" id="Q2LQB5"/>
<dbReference type="FunCoup" id="Q2LQB5">
    <property type="interactions" value="402"/>
</dbReference>
<dbReference type="STRING" id="56780.SYN_01597"/>
<dbReference type="KEGG" id="sat:SYN_01597"/>
<dbReference type="eggNOG" id="COG0361">
    <property type="taxonomic scope" value="Bacteria"/>
</dbReference>
<dbReference type="HOGENOM" id="CLU_151267_1_0_7"/>
<dbReference type="InParanoid" id="Q2LQB5"/>
<dbReference type="OrthoDB" id="9803250at2"/>
<dbReference type="Proteomes" id="UP000001933">
    <property type="component" value="Chromosome"/>
</dbReference>
<dbReference type="GO" id="GO:0005829">
    <property type="term" value="C:cytosol"/>
    <property type="evidence" value="ECO:0007669"/>
    <property type="project" value="TreeGrafter"/>
</dbReference>
<dbReference type="GO" id="GO:0043022">
    <property type="term" value="F:ribosome binding"/>
    <property type="evidence" value="ECO:0007669"/>
    <property type="project" value="UniProtKB-UniRule"/>
</dbReference>
<dbReference type="GO" id="GO:0019843">
    <property type="term" value="F:rRNA binding"/>
    <property type="evidence" value="ECO:0007669"/>
    <property type="project" value="UniProtKB-UniRule"/>
</dbReference>
<dbReference type="GO" id="GO:0003743">
    <property type="term" value="F:translation initiation factor activity"/>
    <property type="evidence" value="ECO:0007669"/>
    <property type="project" value="UniProtKB-UniRule"/>
</dbReference>
<dbReference type="CDD" id="cd04451">
    <property type="entry name" value="S1_IF1"/>
    <property type="match status" value="1"/>
</dbReference>
<dbReference type="FunFam" id="2.40.50.140:FF:000002">
    <property type="entry name" value="Translation initiation factor IF-1"/>
    <property type="match status" value="1"/>
</dbReference>
<dbReference type="Gene3D" id="2.40.50.140">
    <property type="entry name" value="Nucleic acid-binding proteins"/>
    <property type="match status" value="1"/>
</dbReference>
<dbReference type="HAMAP" id="MF_00075">
    <property type="entry name" value="IF_1"/>
    <property type="match status" value="1"/>
</dbReference>
<dbReference type="InterPro" id="IPR012340">
    <property type="entry name" value="NA-bd_OB-fold"/>
</dbReference>
<dbReference type="InterPro" id="IPR006196">
    <property type="entry name" value="RNA-binding_domain_S1_IF1"/>
</dbReference>
<dbReference type="InterPro" id="IPR003029">
    <property type="entry name" value="S1_domain"/>
</dbReference>
<dbReference type="InterPro" id="IPR004368">
    <property type="entry name" value="TIF_IF1"/>
</dbReference>
<dbReference type="NCBIfam" id="TIGR00008">
    <property type="entry name" value="infA"/>
    <property type="match status" value="1"/>
</dbReference>
<dbReference type="PANTHER" id="PTHR33370">
    <property type="entry name" value="TRANSLATION INITIATION FACTOR IF-1, CHLOROPLASTIC"/>
    <property type="match status" value="1"/>
</dbReference>
<dbReference type="PANTHER" id="PTHR33370:SF1">
    <property type="entry name" value="TRANSLATION INITIATION FACTOR IF-1, CHLOROPLASTIC"/>
    <property type="match status" value="1"/>
</dbReference>
<dbReference type="Pfam" id="PF01176">
    <property type="entry name" value="eIF-1a"/>
    <property type="match status" value="1"/>
</dbReference>
<dbReference type="SMART" id="SM00316">
    <property type="entry name" value="S1"/>
    <property type="match status" value="1"/>
</dbReference>
<dbReference type="SUPFAM" id="SSF50249">
    <property type="entry name" value="Nucleic acid-binding proteins"/>
    <property type="match status" value="1"/>
</dbReference>
<dbReference type="PROSITE" id="PS50832">
    <property type="entry name" value="S1_IF1_TYPE"/>
    <property type="match status" value="1"/>
</dbReference>
<proteinExistence type="inferred from homology"/>
<accession>Q2LQB5</accession>
<protein>
    <recommendedName>
        <fullName evidence="1">Translation initiation factor IF-1</fullName>
    </recommendedName>
</protein>
<gene>
    <name evidence="1" type="primary">infA</name>
    <name type="ordered locus">SYNAS_03240</name>
    <name type="ORF">SYN_01597</name>
</gene>
<keyword id="KW-0963">Cytoplasm</keyword>
<keyword id="KW-0396">Initiation factor</keyword>
<keyword id="KW-0648">Protein biosynthesis</keyword>
<keyword id="KW-1185">Reference proteome</keyword>
<keyword id="KW-0694">RNA-binding</keyword>
<keyword id="KW-0699">rRNA-binding</keyword>
<evidence type="ECO:0000255" key="1">
    <source>
        <dbReference type="HAMAP-Rule" id="MF_00075"/>
    </source>
</evidence>
<sequence>MAKEEPIEVEGRVIEPLPNAMFRVELENGHRVLAHISGKMRMHFIKILPGDKVTVELSPYDLTRGRIIYRTK</sequence>
<organism>
    <name type="scientific">Syntrophus aciditrophicus (strain SB)</name>
    <dbReference type="NCBI Taxonomy" id="56780"/>
    <lineage>
        <taxon>Bacteria</taxon>
        <taxon>Pseudomonadati</taxon>
        <taxon>Thermodesulfobacteriota</taxon>
        <taxon>Syntrophia</taxon>
        <taxon>Syntrophales</taxon>
        <taxon>Syntrophaceae</taxon>
        <taxon>Syntrophus</taxon>
    </lineage>
</organism>